<name>RL17_BAUCH</name>
<accession>Q1LTB2</accession>
<reference key="1">
    <citation type="journal article" date="2006" name="PLoS Biol.">
        <title>Metabolic complementarity and genomics of the dual bacterial symbiosis of sharpshooters.</title>
        <authorList>
            <person name="Wu D."/>
            <person name="Daugherty S.C."/>
            <person name="Van Aken S.E."/>
            <person name="Pai G.H."/>
            <person name="Watkins K.L."/>
            <person name="Khouri H."/>
            <person name="Tallon L.J."/>
            <person name="Zaborsky J.M."/>
            <person name="Dunbar H.E."/>
            <person name="Tran P.L."/>
            <person name="Moran N.A."/>
            <person name="Eisen J.A."/>
        </authorList>
    </citation>
    <scope>NUCLEOTIDE SEQUENCE [LARGE SCALE GENOMIC DNA]</scope>
</reference>
<gene>
    <name evidence="1" type="primary">rplQ</name>
    <name type="ordered locus">BCI_0354</name>
</gene>
<dbReference type="EMBL" id="CP000238">
    <property type="protein sequence ID" value="ABF14094.1"/>
    <property type="molecule type" value="Genomic_DNA"/>
</dbReference>
<dbReference type="RefSeq" id="WP_011520535.1">
    <property type="nucleotide sequence ID" value="NC_007984.1"/>
</dbReference>
<dbReference type="SMR" id="Q1LTB2"/>
<dbReference type="STRING" id="374463.BCI_0354"/>
<dbReference type="KEGG" id="bci:BCI_0354"/>
<dbReference type="HOGENOM" id="CLU_074407_2_0_6"/>
<dbReference type="OrthoDB" id="9809073at2"/>
<dbReference type="Proteomes" id="UP000002427">
    <property type="component" value="Chromosome"/>
</dbReference>
<dbReference type="GO" id="GO:0022625">
    <property type="term" value="C:cytosolic large ribosomal subunit"/>
    <property type="evidence" value="ECO:0007669"/>
    <property type="project" value="TreeGrafter"/>
</dbReference>
<dbReference type="GO" id="GO:0003735">
    <property type="term" value="F:structural constituent of ribosome"/>
    <property type="evidence" value="ECO:0007669"/>
    <property type="project" value="InterPro"/>
</dbReference>
<dbReference type="GO" id="GO:0006412">
    <property type="term" value="P:translation"/>
    <property type="evidence" value="ECO:0007669"/>
    <property type="project" value="UniProtKB-UniRule"/>
</dbReference>
<dbReference type="FunFam" id="3.90.1030.10:FF:000001">
    <property type="entry name" value="50S ribosomal protein L17"/>
    <property type="match status" value="1"/>
</dbReference>
<dbReference type="Gene3D" id="3.90.1030.10">
    <property type="entry name" value="Ribosomal protein L17"/>
    <property type="match status" value="1"/>
</dbReference>
<dbReference type="HAMAP" id="MF_01368">
    <property type="entry name" value="Ribosomal_bL17"/>
    <property type="match status" value="1"/>
</dbReference>
<dbReference type="InterPro" id="IPR000456">
    <property type="entry name" value="Ribosomal_bL17"/>
</dbReference>
<dbReference type="InterPro" id="IPR047859">
    <property type="entry name" value="Ribosomal_bL17_CS"/>
</dbReference>
<dbReference type="InterPro" id="IPR036373">
    <property type="entry name" value="Ribosomal_bL17_sf"/>
</dbReference>
<dbReference type="NCBIfam" id="TIGR00059">
    <property type="entry name" value="L17"/>
    <property type="match status" value="1"/>
</dbReference>
<dbReference type="PANTHER" id="PTHR14413:SF16">
    <property type="entry name" value="LARGE RIBOSOMAL SUBUNIT PROTEIN BL17M"/>
    <property type="match status" value="1"/>
</dbReference>
<dbReference type="PANTHER" id="PTHR14413">
    <property type="entry name" value="RIBOSOMAL PROTEIN L17"/>
    <property type="match status" value="1"/>
</dbReference>
<dbReference type="Pfam" id="PF01196">
    <property type="entry name" value="Ribosomal_L17"/>
    <property type="match status" value="1"/>
</dbReference>
<dbReference type="SUPFAM" id="SSF64263">
    <property type="entry name" value="Prokaryotic ribosomal protein L17"/>
    <property type="match status" value="1"/>
</dbReference>
<dbReference type="PROSITE" id="PS01167">
    <property type="entry name" value="RIBOSOMAL_L17"/>
    <property type="match status" value="1"/>
</dbReference>
<sequence length="128" mass="14624">MRHRKCGRKLNRNSSHLHAMLRNMAASLIINEVIKTTLPKAKELPRVVEPLITLAKHDNIANRRLVFAKIRSNEIVSKLFRELGPRFLNRTGGYTRILKCGFRAGDNAPMAYIEFVDRISANNSKDIN</sequence>
<evidence type="ECO:0000255" key="1">
    <source>
        <dbReference type="HAMAP-Rule" id="MF_01368"/>
    </source>
</evidence>
<evidence type="ECO:0000305" key="2"/>
<comment type="subunit">
    <text evidence="1">Part of the 50S ribosomal subunit. Contacts protein L32.</text>
</comment>
<comment type="similarity">
    <text evidence="1">Belongs to the bacterial ribosomal protein bL17 family.</text>
</comment>
<keyword id="KW-1185">Reference proteome</keyword>
<keyword id="KW-0687">Ribonucleoprotein</keyword>
<keyword id="KW-0689">Ribosomal protein</keyword>
<feature type="chain" id="PRO_1000055772" description="Large ribosomal subunit protein bL17">
    <location>
        <begin position="1"/>
        <end position="128"/>
    </location>
</feature>
<protein>
    <recommendedName>
        <fullName evidence="1">Large ribosomal subunit protein bL17</fullName>
    </recommendedName>
    <alternativeName>
        <fullName evidence="2">50S ribosomal protein L17</fullName>
    </alternativeName>
</protein>
<organism>
    <name type="scientific">Baumannia cicadellinicola subsp. Homalodisca coagulata</name>
    <dbReference type="NCBI Taxonomy" id="374463"/>
    <lineage>
        <taxon>Bacteria</taxon>
        <taxon>Pseudomonadati</taxon>
        <taxon>Pseudomonadota</taxon>
        <taxon>Gammaproteobacteria</taxon>
        <taxon>Candidatus Palibaumannia</taxon>
    </lineage>
</organism>
<proteinExistence type="inferred from homology"/>